<sequence length="138" mass="15835">MQPIIKGAVSSTFKRALYNFGIKEKKSVNIEMGRTQQTKKIDQSLSKKLPKGTIYDPFDFSMGRIHLDRKYQANKNSNRNDIMKSGANPLEFYARPRILSRYVTSTGRIQHRDITGLSAKNQRRLSKAIRRCQAIGLM</sequence>
<protein>
    <recommendedName>
        <fullName evidence="3">Small ribosomal subunit protein bS18m</fullName>
    </recommendedName>
    <alternativeName>
        <fullName>37S ribosomal protein RSM18, mitochondrial</fullName>
    </alternativeName>
</protein>
<keyword id="KW-0496">Mitochondrion</keyword>
<keyword id="KW-0687">Ribonucleoprotein</keyword>
<keyword id="KW-0689">Ribosomal protein</keyword>
<keyword id="KW-0809">Transit peptide</keyword>
<accession>B3LS63</accession>
<name>RSM18_YEAS1</name>
<feature type="transit peptide" description="Mitochondrion" evidence="2">
    <location>
        <begin position="1"/>
        <end status="unknown"/>
    </location>
</feature>
<feature type="chain" id="PRO_0000377629" description="Small ribosomal subunit protein bS18m">
    <location>
        <begin status="unknown"/>
        <end position="138"/>
    </location>
</feature>
<feature type="sequence conflict" description="In Ref. 1; EDV08879." evidence="3" ref="1">
    <original>M</original>
    <variation>I</variation>
    <location>
        <position position="1"/>
    </location>
</feature>
<organism>
    <name type="scientific">Saccharomyces cerevisiae (strain RM11-1a)</name>
    <name type="common">Baker's yeast</name>
    <dbReference type="NCBI Taxonomy" id="285006"/>
    <lineage>
        <taxon>Eukaryota</taxon>
        <taxon>Fungi</taxon>
        <taxon>Dikarya</taxon>
        <taxon>Ascomycota</taxon>
        <taxon>Saccharomycotina</taxon>
        <taxon>Saccharomycetes</taxon>
        <taxon>Saccharomycetales</taxon>
        <taxon>Saccharomycetaceae</taxon>
        <taxon>Saccharomyces</taxon>
    </lineage>
</organism>
<comment type="subunit">
    <text evidence="1">Component of the mitochondrial small ribosomal subunit. Mature mitochondrial ribosomes consist of a small (37S) and a large (54S) subunit. The 37S subunit contains at least 33 different proteins and 1 molecule of RNA (15S). The 54S subunit contains at least 45 different proteins and 1 molecule of RNA (21S) (By similarity).</text>
</comment>
<comment type="subcellular location">
    <subcellularLocation>
        <location evidence="1">Mitochondrion</location>
    </subcellularLocation>
</comment>
<comment type="similarity">
    <text evidence="3">Belongs to the bacterial ribosomal protein bS18 family.</text>
</comment>
<comment type="sequence caution" evidence="3">
    <conflict type="erroneous initiation">
        <sequence resource="EMBL-CDS" id="EDV08879"/>
    </conflict>
</comment>
<dbReference type="EMBL" id="CH408052">
    <property type="protein sequence ID" value="EDV08879.1"/>
    <property type="status" value="ALT_INIT"/>
    <property type="molecule type" value="Genomic_DNA"/>
</dbReference>
<dbReference type="SMR" id="B3LS63"/>
<dbReference type="HOGENOM" id="CLU_082177_2_0_1"/>
<dbReference type="OrthoDB" id="4526at4893"/>
<dbReference type="Proteomes" id="UP000008335">
    <property type="component" value="Unassembled WGS sequence"/>
</dbReference>
<dbReference type="GO" id="GO:0005763">
    <property type="term" value="C:mitochondrial small ribosomal subunit"/>
    <property type="evidence" value="ECO:0007669"/>
    <property type="project" value="TreeGrafter"/>
</dbReference>
<dbReference type="GO" id="GO:0070181">
    <property type="term" value="F:small ribosomal subunit rRNA binding"/>
    <property type="evidence" value="ECO:0007669"/>
    <property type="project" value="TreeGrafter"/>
</dbReference>
<dbReference type="GO" id="GO:0003735">
    <property type="term" value="F:structural constituent of ribosome"/>
    <property type="evidence" value="ECO:0007669"/>
    <property type="project" value="InterPro"/>
</dbReference>
<dbReference type="GO" id="GO:0032543">
    <property type="term" value="P:mitochondrial translation"/>
    <property type="evidence" value="ECO:0007669"/>
    <property type="project" value="TreeGrafter"/>
</dbReference>
<dbReference type="FunFam" id="4.10.640.10:FF:000020">
    <property type="entry name" value="37S ribosomal protein RSM18, mitochondrial"/>
    <property type="match status" value="1"/>
</dbReference>
<dbReference type="Gene3D" id="4.10.640.10">
    <property type="entry name" value="Ribosomal protein S18"/>
    <property type="match status" value="1"/>
</dbReference>
<dbReference type="InterPro" id="IPR001648">
    <property type="entry name" value="Ribosomal_bS18"/>
</dbReference>
<dbReference type="InterPro" id="IPR036870">
    <property type="entry name" value="Ribosomal_bS18_sf"/>
</dbReference>
<dbReference type="PANTHER" id="PTHR13479">
    <property type="entry name" value="30S RIBOSOMAL PROTEIN S18"/>
    <property type="match status" value="1"/>
</dbReference>
<dbReference type="PANTHER" id="PTHR13479:SF40">
    <property type="entry name" value="SMALL RIBOSOMAL SUBUNIT PROTEIN BS18M"/>
    <property type="match status" value="1"/>
</dbReference>
<dbReference type="Pfam" id="PF01084">
    <property type="entry name" value="Ribosomal_S18"/>
    <property type="match status" value="1"/>
</dbReference>
<dbReference type="PRINTS" id="PR00974">
    <property type="entry name" value="RIBOSOMALS18"/>
</dbReference>
<dbReference type="SUPFAM" id="SSF46911">
    <property type="entry name" value="Ribosomal protein S18"/>
    <property type="match status" value="1"/>
</dbReference>
<proteinExistence type="inferred from homology"/>
<reference key="1">
    <citation type="submission" date="2005-03" db="EMBL/GenBank/DDBJ databases">
        <title>Annotation of the Saccharomyces cerevisiae RM11-1a genome.</title>
        <authorList>
            <consortium name="The Broad Institute Genome Sequencing Platform"/>
            <person name="Birren B.W."/>
            <person name="Lander E.S."/>
            <person name="Galagan J.E."/>
            <person name="Nusbaum C."/>
            <person name="Devon K."/>
            <person name="Cuomo C."/>
            <person name="Jaffe D.B."/>
            <person name="Butler J."/>
            <person name="Alvarez P."/>
            <person name="Gnerre S."/>
            <person name="Grabherr M."/>
            <person name="Kleber M."/>
            <person name="Mauceli E.W."/>
            <person name="Brockman W."/>
            <person name="MacCallum I.A."/>
            <person name="Rounsley S."/>
            <person name="Young S.K."/>
            <person name="LaButti K."/>
            <person name="Pushparaj V."/>
            <person name="DeCaprio D."/>
            <person name="Crawford M."/>
            <person name="Koehrsen M."/>
            <person name="Engels R."/>
            <person name="Montgomery P."/>
            <person name="Pearson M."/>
            <person name="Howarth C."/>
            <person name="Larson L."/>
            <person name="Luoma S."/>
            <person name="White J."/>
            <person name="O'Leary S."/>
            <person name="Kodira C.D."/>
            <person name="Zeng Q."/>
            <person name="Yandava C."/>
            <person name="Alvarado L."/>
            <person name="Pratt S."/>
            <person name="Kruglyak L."/>
        </authorList>
    </citation>
    <scope>NUCLEOTIDE SEQUENCE [LARGE SCALE GENOMIC DNA]</scope>
    <source>
        <strain>RM11-1a</strain>
    </source>
</reference>
<gene>
    <name type="primary">RSM18</name>
    <name type="ORF">SCRG_04522</name>
</gene>
<evidence type="ECO:0000250" key="1"/>
<evidence type="ECO:0000255" key="2"/>
<evidence type="ECO:0000305" key="3"/>